<proteinExistence type="evidence at protein level"/>
<gene>
    <name type="primary">ppsA</name>
    <name type="synonym">pps</name>
    <name type="ordered locus">b1702</name>
    <name type="ordered locus">JW1692</name>
</gene>
<feature type="initiator methionine" description="Removed" evidence="2">
    <location>
        <position position="1"/>
    </location>
</feature>
<feature type="chain" id="PRO_0000147034" description="Phosphoenolpyruvate synthase">
    <location>
        <begin position="2"/>
        <end position="792"/>
    </location>
</feature>
<feature type="active site" description="Tele-phosphohistidine intermediate" evidence="1">
    <location>
        <position position="421"/>
    </location>
</feature>
<feature type="active site" description="Proton donor" evidence="1">
    <location>
        <position position="751"/>
    </location>
</feature>
<feature type="binding site" evidence="1">
    <location>
        <position position="511"/>
    </location>
    <ligand>
        <name>substrate</name>
    </ligand>
</feature>
<feature type="binding site" evidence="1">
    <location>
        <position position="578"/>
    </location>
    <ligand>
        <name>substrate</name>
    </ligand>
</feature>
<feature type="binding site" evidence="1">
    <location>
        <position position="680"/>
    </location>
    <ligand>
        <name>Mg(2+)</name>
        <dbReference type="ChEBI" id="CHEBI:18420"/>
    </ligand>
</feature>
<feature type="binding site" evidence="1">
    <location>
        <position position="680"/>
    </location>
    <ligand>
        <name>substrate</name>
    </ligand>
</feature>
<feature type="binding site" evidence="1">
    <location>
        <position position="701"/>
    </location>
    <ligand>
        <name>substrate</name>
    </ligand>
</feature>
<feature type="binding site" evidence="1">
    <location>
        <position position="702"/>
    </location>
    <ligand>
        <name>substrate</name>
    </ligand>
</feature>
<feature type="binding site" evidence="1">
    <location>
        <position position="703"/>
    </location>
    <ligand>
        <name>substrate</name>
    </ligand>
</feature>
<feature type="binding site" evidence="1">
    <location>
        <position position="704"/>
    </location>
    <ligand>
        <name>Mg(2+)</name>
        <dbReference type="ChEBI" id="CHEBI:18420"/>
    </ligand>
</feature>
<feature type="binding site" evidence="1">
    <location>
        <position position="704"/>
    </location>
    <ligand>
        <name>substrate</name>
    </ligand>
</feature>
<feature type="sequence conflict" description="In Ref. 1; AAA24319." evidence="7" ref="1">
    <original>RM</original>
    <variation>AGL</variation>
    <location>
        <begin position="194"/>
        <end position="195"/>
    </location>
</feature>
<feature type="sequence conflict" description="In Ref. 1; AAA24319." evidence="7" ref="1">
    <original>RSRGQVMERYTLHSQGKIIA</original>
    <variation>AHAVRSWSVIRCIHRVRLSP</variation>
    <location>
        <begin position="341"/>
        <end position="360"/>
    </location>
</feature>
<organism>
    <name type="scientific">Escherichia coli (strain K12)</name>
    <dbReference type="NCBI Taxonomy" id="83333"/>
    <lineage>
        <taxon>Bacteria</taxon>
        <taxon>Pseudomonadati</taxon>
        <taxon>Pseudomonadota</taxon>
        <taxon>Gammaproteobacteria</taxon>
        <taxon>Enterobacterales</taxon>
        <taxon>Enterobacteriaceae</taxon>
        <taxon>Escherichia</taxon>
    </lineage>
</organism>
<evidence type="ECO:0000250" key="1"/>
<evidence type="ECO:0000269" key="2">
    <source>
    </source>
</evidence>
<evidence type="ECO:0000269" key="3">
    <source>
    </source>
</evidence>
<evidence type="ECO:0000269" key="4">
    <source>
    </source>
</evidence>
<evidence type="ECO:0000269" key="5">
    <source>
    </source>
</evidence>
<evidence type="ECO:0000269" key="6">
    <source>
    </source>
</evidence>
<evidence type="ECO:0000305" key="7"/>
<name>PPSA_ECOLI</name>
<reference key="1">
    <citation type="submission" date="1991-06" db="EMBL/GenBank/DDBJ databases">
        <title>The cloning and sequence of the E. coli pps gene.</title>
        <authorList>
            <person name="Holzschu D.L."/>
            <person name="McElver J.A."/>
            <person name="Liao C.C."/>
            <person name="Berry A."/>
        </authorList>
    </citation>
    <scope>NUCLEOTIDE SEQUENCE [GENOMIC DNA]</scope>
    <source>
        <strain>K12</strain>
    </source>
</reference>
<reference key="2">
    <citation type="journal article" date="1992" name="Mol. Gen. Genet.">
        <title>Cloning and nucleotide sequence of the Escherichia coli K-12 ppsA gene, encoding PEP synthase.</title>
        <authorList>
            <person name="Niersbach M."/>
            <person name="Kreuzaler F."/>
            <person name="Geerse R.H."/>
            <person name="Postma P.W."/>
            <person name="Hirsch H.J."/>
        </authorList>
    </citation>
    <scope>NUCLEOTIDE SEQUENCE [GENOMIC DNA]</scope>
    <scope>PROTEIN SEQUENCE OF 2-21</scope>
    <source>
        <strain>K12</strain>
    </source>
</reference>
<reference key="3">
    <citation type="journal article" date="1996" name="DNA Res.">
        <title>A 570-kb DNA sequence of the Escherichia coli K-12 genome corresponding to the 28.0-40.1 min region on the linkage map.</title>
        <authorList>
            <person name="Aiba H."/>
            <person name="Baba T."/>
            <person name="Fujita K."/>
            <person name="Hayashi K."/>
            <person name="Inada T."/>
            <person name="Isono K."/>
            <person name="Itoh T."/>
            <person name="Kasai H."/>
            <person name="Kashimoto K."/>
            <person name="Kimura S."/>
            <person name="Kitakawa M."/>
            <person name="Kitagawa M."/>
            <person name="Makino K."/>
            <person name="Miki T."/>
            <person name="Mizobuchi K."/>
            <person name="Mori H."/>
            <person name="Mori T."/>
            <person name="Motomura K."/>
            <person name="Nakade S."/>
            <person name="Nakamura Y."/>
            <person name="Nashimoto H."/>
            <person name="Nishio Y."/>
            <person name="Oshima T."/>
            <person name="Saito N."/>
            <person name="Sampei G."/>
            <person name="Seki Y."/>
            <person name="Sivasundaram S."/>
            <person name="Tagami H."/>
            <person name="Takeda J."/>
            <person name="Takemoto K."/>
            <person name="Takeuchi Y."/>
            <person name="Wada C."/>
            <person name="Yamamoto Y."/>
            <person name="Horiuchi T."/>
        </authorList>
    </citation>
    <scope>NUCLEOTIDE SEQUENCE [LARGE SCALE GENOMIC DNA]</scope>
    <source>
        <strain>K12 / W3110 / ATCC 27325 / DSM 5911</strain>
    </source>
</reference>
<reference key="4">
    <citation type="journal article" date="1997" name="Science">
        <title>The complete genome sequence of Escherichia coli K-12.</title>
        <authorList>
            <person name="Blattner F.R."/>
            <person name="Plunkett G. III"/>
            <person name="Bloch C.A."/>
            <person name="Perna N.T."/>
            <person name="Burland V."/>
            <person name="Riley M."/>
            <person name="Collado-Vides J."/>
            <person name="Glasner J.D."/>
            <person name="Rode C.K."/>
            <person name="Mayhew G.F."/>
            <person name="Gregor J."/>
            <person name="Davis N.W."/>
            <person name="Kirkpatrick H.A."/>
            <person name="Goeden M.A."/>
            <person name="Rose D.J."/>
            <person name="Mau B."/>
            <person name="Shao Y."/>
        </authorList>
    </citation>
    <scope>NUCLEOTIDE SEQUENCE [LARGE SCALE GENOMIC DNA]</scope>
    <source>
        <strain>K12 / MG1655 / ATCC 47076</strain>
    </source>
</reference>
<reference key="5">
    <citation type="journal article" date="2006" name="Mol. Syst. Biol.">
        <title>Highly accurate genome sequences of Escherichia coli K-12 strains MG1655 and W3110.</title>
        <authorList>
            <person name="Hayashi K."/>
            <person name="Morooka N."/>
            <person name="Yamamoto Y."/>
            <person name="Fujita K."/>
            <person name="Isono K."/>
            <person name="Choi S."/>
            <person name="Ohtsubo E."/>
            <person name="Baba T."/>
            <person name="Wanner B.L."/>
            <person name="Mori H."/>
            <person name="Horiuchi T."/>
        </authorList>
    </citation>
    <scope>NUCLEOTIDE SEQUENCE [LARGE SCALE GENOMIC DNA]</scope>
    <source>
        <strain>K12 / W3110 / ATCC 27325 / DSM 5911</strain>
    </source>
</reference>
<reference key="6">
    <citation type="journal article" date="1967" name="Biochim. Biophys. Acta">
        <title>The mechanism of the phosphoenolpyruvate synthase reaction.</title>
        <authorList>
            <person name="Cooper R.A."/>
            <person name="Kornberg H.L."/>
        </authorList>
    </citation>
    <scope>CATALYTIC ACTIVITY</scope>
</reference>
<reference key="7">
    <citation type="journal article" date="1970" name="J. Biol. Chem.">
        <title>Phosphoenolpyruvate synthetase of Escherichia coli. Purification, some properties, and the role of divalent metal ions.</title>
        <authorList>
            <person name="Berman K.M."/>
            <person name="Cohn M."/>
        </authorList>
    </citation>
    <scope>FUNCTION</scope>
    <scope>CATALYTIC ACTIVITY</scope>
    <scope>COFACTOR</scope>
    <scope>BIOPHYSICOCHEMICAL PROPERTIES</scope>
</reference>
<reference key="8">
    <citation type="journal article" date="1977" name="J. Biol. Chem.">
        <title>Phosphoenolypyruvate synthetase of Escherichia coli: molecular weight, subunit composition, and identification of phosphohistidine in phosphoenzyme intermediate.</title>
        <authorList>
            <person name="Narindrasorasak S."/>
            <person name="Bridger W.A."/>
        </authorList>
    </citation>
    <scope>PHOSPHOINTERMEDIATE OF REACTION</scope>
    <scope>SUBUNIT</scope>
    <scope>AMINO-ACID COMPOSITION</scope>
</reference>
<reference key="9">
    <citation type="journal article" date="1997" name="Electrophoresis">
        <title>Escherichia coli proteome analysis using the gene-protein database.</title>
        <authorList>
            <person name="VanBogelen R.A."/>
            <person name="Abshire K.Z."/>
            <person name="Moldover B."/>
            <person name="Olson E.R."/>
            <person name="Neidhardt F.C."/>
        </authorList>
    </citation>
    <scope>IDENTIFICATION BY 2D-GEL</scope>
</reference>
<reference key="10">
    <citation type="journal article" date="2010" name="BMC Biochem.">
        <title>Cloning and characterization of Escherichia coli DUF299: a bifunctional ADP-dependent kinase--Pi-dependent pyrophosphorylase from bacteria.</title>
        <authorList>
            <person name="Burnell J.N."/>
        </authorList>
    </citation>
    <scope>ACTIVITY REGULATION</scope>
</reference>
<sequence>MSNNGSSPLVLWYNQLGMNDVDRVGGKNASLGEMITNLSGMGVSVPNGFATTADAFNQFLDQSGVNQRIYELLDKTDIDDVTQLAKAGAQIRQWIIDTPFQPELENAIREAYAQLSADDENASFAVRSSATAEDMPDASFAGQQETFLNVQGFDAVLVAVKHVFASLFNDRAISYRVHQGYDHRGVALSAGVQRMVRSDLASSGVMFSIDTESGFDQVVFITSAWGLGEMVVQGAVNPDEFYVHKPTLAANRPAIVRRTMGSKKIRMVYAPTQEHGKQVKIEDVPQEQRDIFSLTNEEVQELAKQAVQIEKHYGRPMDIEWAKDGHTGKLFIVQARPETVRSRGQVMERYTLHSQGKIIAEGRAIGHRIGAGPVKVIHDISEMNRIEPGDVLVTDMTDPDWEPIMKKASAIVTNRGGRTCHAAIIARELGIPAVVGCGDATERMKDGENVTVSCAEGDTGYVYAELLEFSVKSSSVETMPDLPLKVMMNVGNPDRAFDFACLPNEGVGLARLEFIINRMIGVHPRALLEFDDQEPQLQNEIREMMKGFDSPREFYVGRLTEGIATLGAAFYPKRVIVRLSDFKSNEYANLVGGERYEPDEENPMLGFRGAGRYVSDSFRDCFALECEAVKRVRNDMGLTNVEIMIPFVRTVDQAKAVVEELARQGLKRGENGLKIIMMCEIPSNALLAEQFLEYFDGFSIGSNDMTQLALGLDRDSGVVSELFDERNDAVKALLSMAIRAAKKQGKYVGICGQGPSDHEDFAAWLMEEGIDSLSLNPDTVVQTWLSLAELKK</sequence>
<accession>P23538</accession>
<keyword id="KW-0067">ATP-binding</keyword>
<keyword id="KW-0903">Direct protein sequencing</keyword>
<keyword id="KW-0418">Kinase</keyword>
<keyword id="KW-0460">Magnesium</keyword>
<keyword id="KW-0479">Metal-binding</keyword>
<keyword id="KW-0547">Nucleotide-binding</keyword>
<keyword id="KW-1185">Reference proteome</keyword>
<keyword id="KW-0808">Transferase</keyword>
<dbReference type="EC" id="2.7.9.2"/>
<dbReference type="EMBL" id="M69116">
    <property type="protein sequence ID" value="AAA24319.1"/>
    <property type="molecule type" value="Genomic_DNA"/>
</dbReference>
<dbReference type="EMBL" id="X59381">
    <property type="protein sequence ID" value="CAA42024.1"/>
    <property type="molecule type" value="Genomic_DNA"/>
</dbReference>
<dbReference type="EMBL" id="U00096">
    <property type="protein sequence ID" value="AAC74772.1"/>
    <property type="molecule type" value="Genomic_DNA"/>
</dbReference>
<dbReference type="EMBL" id="AP009048">
    <property type="protein sequence ID" value="BAA15471.1"/>
    <property type="molecule type" value="Genomic_DNA"/>
</dbReference>
<dbReference type="PIR" id="S20554">
    <property type="entry name" value="S20554"/>
</dbReference>
<dbReference type="RefSeq" id="NP_416217.1">
    <property type="nucleotide sequence ID" value="NC_000913.3"/>
</dbReference>
<dbReference type="RefSeq" id="WP_000069375.1">
    <property type="nucleotide sequence ID" value="NZ_SSZK01000001.1"/>
</dbReference>
<dbReference type="SMR" id="P23538"/>
<dbReference type="BioGRID" id="4262084">
    <property type="interactions" value="18"/>
</dbReference>
<dbReference type="DIP" id="DIP-10552N"/>
<dbReference type="FunCoup" id="P23538">
    <property type="interactions" value="367"/>
</dbReference>
<dbReference type="IntAct" id="P23538">
    <property type="interactions" value="10"/>
</dbReference>
<dbReference type="STRING" id="511145.b1702"/>
<dbReference type="jPOST" id="P23538"/>
<dbReference type="PaxDb" id="511145-b1702"/>
<dbReference type="EnsemblBacteria" id="AAC74772">
    <property type="protein sequence ID" value="AAC74772"/>
    <property type="gene ID" value="b1702"/>
</dbReference>
<dbReference type="GeneID" id="75203549"/>
<dbReference type="GeneID" id="946209"/>
<dbReference type="KEGG" id="ecj:JW1692"/>
<dbReference type="KEGG" id="eco:b1702"/>
<dbReference type="KEGG" id="ecoc:C3026_09745"/>
<dbReference type="PATRIC" id="fig|1411691.4.peg.555"/>
<dbReference type="EchoBASE" id="EB0752"/>
<dbReference type="eggNOG" id="COG0574">
    <property type="taxonomic scope" value="Bacteria"/>
</dbReference>
<dbReference type="eggNOG" id="COG1080">
    <property type="taxonomic scope" value="Bacteria"/>
</dbReference>
<dbReference type="HOGENOM" id="CLU_007308_6_2_6"/>
<dbReference type="InParanoid" id="P23538"/>
<dbReference type="OMA" id="HFFHEVG"/>
<dbReference type="OrthoDB" id="9765468at2"/>
<dbReference type="PhylomeDB" id="P23538"/>
<dbReference type="BioCyc" id="EcoCyc:PEPSYNTH-MONOMER"/>
<dbReference type="BioCyc" id="MetaCyc:PEPSYNTH-MONOMER"/>
<dbReference type="BRENDA" id="2.7.9.2">
    <property type="organism ID" value="2026"/>
</dbReference>
<dbReference type="SABIO-RK" id="P23538"/>
<dbReference type="UniPathway" id="UPA00138"/>
<dbReference type="PRO" id="PR:P23538"/>
<dbReference type="Proteomes" id="UP000000625">
    <property type="component" value="Chromosome"/>
</dbReference>
<dbReference type="GO" id="GO:0005524">
    <property type="term" value="F:ATP binding"/>
    <property type="evidence" value="ECO:0007669"/>
    <property type="project" value="UniProtKB-KW"/>
</dbReference>
<dbReference type="GO" id="GO:0000287">
    <property type="term" value="F:magnesium ion binding"/>
    <property type="evidence" value="ECO:0000314"/>
    <property type="project" value="EcoCyc"/>
</dbReference>
<dbReference type="GO" id="GO:0042803">
    <property type="term" value="F:protein homodimerization activity"/>
    <property type="evidence" value="ECO:0000353"/>
    <property type="project" value="EcoCyc"/>
</dbReference>
<dbReference type="GO" id="GO:0008986">
    <property type="term" value="F:pyruvate, water dikinase activity"/>
    <property type="evidence" value="ECO:0000314"/>
    <property type="project" value="EcoCyc"/>
</dbReference>
<dbReference type="GO" id="GO:0006094">
    <property type="term" value="P:gluconeogenesis"/>
    <property type="evidence" value="ECO:0000315"/>
    <property type="project" value="EcoCyc"/>
</dbReference>
<dbReference type="FunFam" id="3.20.20.60:FF:000010">
    <property type="entry name" value="Phosphoenolpyruvate synthase"/>
    <property type="match status" value="1"/>
</dbReference>
<dbReference type="FunFam" id="3.30.1490.20:FF:000010">
    <property type="entry name" value="Phosphoenolpyruvate synthase"/>
    <property type="match status" value="1"/>
</dbReference>
<dbReference type="FunFam" id="3.30.470.20:FF:000017">
    <property type="entry name" value="Phosphoenolpyruvate synthase"/>
    <property type="match status" value="1"/>
</dbReference>
<dbReference type="FunFam" id="3.50.30.10:FF:000002">
    <property type="entry name" value="Phosphoenolpyruvate synthase"/>
    <property type="match status" value="1"/>
</dbReference>
<dbReference type="Gene3D" id="3.30.1490.20">
    <property type="entry name" value="ATP-grasp fold, A domain"/>
    <property type="match status" value="1"/>
</dbReference>
<dbReference type="Gene3D" id="3.30.470.20">
    <property type="entry name" value="ATP-grasp fold, B domain"/>
    <property type="match status" value="1"/>
</dbReference>
<dbReference type="Gene3D" id="3.20.20.60">
    <property type="entry name" value="Phosphoenolpyruvate-binding domains"/>
    <property type="match status" value="1"/>
</dbReference>
<dbReference type="Gene3D" id="3.50.30.10">
    <property type="entry name" value="Phosphohistidine domain"/>
    <property type="match status" value="1"/>
</dbReference>
<dbReference type="InterPro" id="IPR013815">
    <property type="entry name" value="ATP_grasp_subdomain_1"/>
</dbReference>
<dbReference type="InterPro" id="IPR008279">
    <property type="entry name" value="PEP-util_enz_mobile_dom"/>
</dbReference>
<dbReference type="InterPro" id="IPR006319">
    <property type="entry name" value="PEP_synth"/>
</dbReference>
<dbReference type="InterPro" id="IPR018274">
    <property type="entry name" value="PEP_util_AS"/>
</dbReference>
<dbReference type="InterPro" id="IPR000121">
    <property type="entry name" value="PEP_util_C"/>
</dbReference>
<dbReference type="InterPro" id="IPR023151">
    <property type="entry name" value="PEP_util_CS"/>
</dbReference>
<dbReference type="InterPro" id="IPR036637">
    <property type="entry name" value="Phosphohistidine_dom_sf"/>
</dbReference>
<dbReference type="InterPro" id="IPR002192">
    <property type="entry name" value="PPDK_AMP/ATP-bd"/>
</dbReference>
<dbReference type="InterPro" id="IPR015813">
    <property type="entry name" value="Pyrv/PenolPyrv_kinase-like_dom"/>
</dbReference>
<dbReference type="InterPro" id="IPR040442">
    <property type="entry name" value="Pyrv_kinase-like_dom_sf"/>
</dbReference>
<dbReference type="NCBIfam" id="TIGR01418">
    <property type="entry name" value="PEP_synth"/>
    <property type="match status" value="1"/>
</dbReference>
<dbReference type="NCBIfam" id="NF005057">
    <property type="entry name" value="PRK06464.1"/>
    <property type="match status" value="1"/>
</dbReference>
<dbReference type="PANTHER" id="PTHR43030">
    <property type="entry name" value="PHOSPHOENOLPYRUVATE SYNTHASE"/>
    <property type="match status" value="1"/>
</dbReference>
<dbReference type="PANTHER" id="PTHR43030:SF1">
    <property type="entry name" value="PHOSPHOENOLPYRUVATE SYNTHASE"/>
    <property type="match status" value="1"/>
</dbReference>
<dbReference type="Pfam" id="PF00391">
    <property type="entry name" value="PEP-utilizers"/>
    <property type="match status" value="1"/>
</dbReference>
<dbReference type="Pfam" id="PF02896">
    <property type="entry name" value="PEP-utilizers_C"/>
    <property type="match status" value="1"/>
</dbReference>
<dbReference type="Pfam" id="PF01326">
    <property type="entry name" value="PPDK_N"/>
    <property type="match status" value="1"/>
</dbReference>
<dbReference type="PIRSF" id="PIRSF000854">
    <property type="entry name" value="PEP_synthase"/>
    <property type="match status" value="1"/>
</dbReference>
<dbReference type="SUPFAM" id="SSF56059">
    <property type="entry name" value="Glutathione synthetase ATP-binding domain-like"/>
    <property type="match status" value="1"/>
</dbReference>
<dbReference type="SUPFAM" id="SSF51621">
    <property type="entry name" value="Phosphoenolpyruvate/pyruvate domain"/>
    <property type="match status" value="1"/>
</dbReference>
<dbReference type="SUPFAM" id="SSF52009">
    <property type="entry name" value="Phosphohistidine domain"/>
    <property type="match status" value="1"/>
</dbReference>
<dbReference type="PROSITE" id="PS00742">
    <property type="entry name" value="PEP_ENZYMES_2"/>
    <property type="match status" value="1"/>
</dbReference>
<dbReference type="PROSITE" id="PS00370">
    <property type="entry name" value="PEP_ENZYMES_PHOS_SITE"/>
    <property type="match status" value="1"/>
</dbReference>
<protein>
    <recommendedName>
        <fullName>Phosphoenolpyruvate synthase</fullName>
        <shortName>PEP synthase</shortName>
        <ecNumber>2.7.9.2</ecNumber>
    </recommendedName>
    <alternativeName>
        <fullName>Pyruvate, water dikinase</fullName>
    </alternativeName>
</protein>
<comment type="function">
    <text evidence="6">Catalyzes the phosphorylation of pyruvate to phosphoenolpyruvate.</text>
</comment>
<comment type="catalytic activity">
    <reaction evidence="5 6">
        <text>pyruvate + ATP + H2O = phosphoenolpyruvate + AMP + phosphate + 2 H(+)</text>
        <dbReference type="Rhea" id="RHEA:11364"/>
        <dbReference type="ChEBI" id="CHEBI:15361"/>
        <dbReference type="ChEBI" id="CHEBI:15377"/>
        <dbReference type="ChEBI" id="CHEBI:15378"/>
        <dbReference type="ChEBI" id="CHEBI:30616"/>
        <dbReference type="ChEBI" id="CHEBI:43474"/>
        <dbReference type="ChEBI" id="CHEBI:58702"/>
        <dbReference type="ChEBI" id="CHEBI:456215"/>
        <dbReference type="EC" id="2.7.9.2"/>
    </reaction>
</comment>
<comment type="cofactor">
    <cofactor evidence="6">
        <name>Mg(2+)</name>
        <dbReference type="ChEBI" id="CHEBI:18420"/>
    </cofactor>
</comment>
<comment type="activity regulation">
    <text evidence="4">Activated by a Pi-dependent pyrophosphorylation and inactivated by an ADP-dependent phosphorylation on a regulatory threonine. Both reactions are mediated by the bifunctional serine/threonine kinase and phosphorylase PpsR.</text>
</comment>
<comment type="biophysicochemical properties">
    <kinetics>
        <KM evidence="6">0.083 mM for pyruvate</KM>
        <KM evidence="6">0.028 mM for ATP</KM>
        <KM evidence="6">10.4 mM for phosphate</KM>
    </kinetics>
</comment>
<comment type="pathway">
    <text>Carbohydrate biosynthesis; gluconeogenesis.</text>
</comment>
<comment type="subunit">
    <text evidence="3">Homodimer.</text>
</comment>
<comment type="domain">
    <text evidence="1">The N-terminal domain contains the ATP/Pi binding site, the central domain the pyrophosphate/phosphate carrier histidine, and the C-terminal domain the pyruvate binding site.</text>
</comment>
<comment type="miscellaneous">
    <text evidence="1">The reaction takes place in three steps, mediated by a phosphocarrier histidine residue located on the surface of the central domain. The two first partial reactions are catalyzed at an active site located on the N-terminal domain, and the third partial reaction is catalyzed at an active site located on the C-terminal domain. For catalytic turnover, the central domain swivels from the concave surface of the N-terminal domain to that of the C-terminal domain (By similarity).</text>
</comment>
<comment type="similarity">
    <text evidence="7">Belongs to the PEP-utilizing enzyme family.</text>
</comment>